<organism>
    <name type="scientific">Lucihormetica subcincta</name>
    <name type="common">Glow spot roach</name>
    <dbReference type="NCBI Taxonomy" id="406666"/>
    <lineage>
        <taxon>Eukaryota</taxon>
        <taxon>Metazoa</taxon>
        <taxon>Ecdysozoa</taxon>
        <taxon>Arthropoda</taxon>
        <taxon>Hexapoda</taxon>
        <taxon>Insecta</taxon>
        <taxon>Pterygota</taxon>
        <taxon>Neoptera</taxon>
        <taxon>Polyneoptera</taxon>
        <taxon>Dictyoptera</taxon>
        <taxon>Blattodea</taxon>
        <taxon>Blaberoidea</taxon>
        <taxon>Blaberidae</taxon>
        <taxon>Blaberinae</taxon>
        <taxon>Lucihormetica</taxon>
    </lineage>
</organism>
<dbReference type="GO" id="GO:0005576">
    <property type="term" value="C:extracellular region"/>
    <property type="evidence" value="ECO:0007669"/>
    <property type="project" value="UniProtKB-SubCell"/>
</dbReference>
<dbReference type="GO" id="GO:0005179">
    <property type="term" value="F:hormone activity"/>
    <property type="evidence" value="ECO:0007669"/>
    <property type="project" value="UniProtKB-KW"/>
</dbReference>
<dbReference type="GO" id="GO:0007218">
    <property type="term" value="P:neuropeptide signaling pathway"/>
    <property type="evidence" value="ECO:0007669"/>
    <property type="project" value="UniProtKB-KW"/>
</dbReference>
<dbReference type="InterPro" id="IPR013152">
    <property type="entry name" value="Gastrin/cholecystokinin_CS"/>
</dbReference>
<dbReference type="InterPro" id="IPR013259">
    <property type="entry name" value="Sulfakinin"/>
</dbReference>
<dbReference type="Pfam" id="PF08257">
    <property type="entry name" value="Sulfakinin"/>
    <property type="match status" value="1"/>
</dbReference>
<dbReference type="PROSITE" id="PS00259">
    <property type="entry name" value="GASTRIN"/>
    <property type="match status" value="1"/>
</dbReference>
<reference evidence="5" key="1">
    <citation type="journal article" date="2009" name="BMC Evol. Biol.">
        <title>A proteomic approach for studying insect phylogeny: CAPA peptides of ancient insect taxa (Dictyoptera, Blattoptera) as a test case.</title>
        <authorList>
            <person name="Roth S."/>
            <person name="Fromm B."/>
            <person name="Gaede G."/>
            <person name="Predel R."/>
        </authorList>
    </citation>
    <scope>PROTEIN SEQUENCE</scope>
    <scope>AMIDATION AT PHE-11</scope>
    <source>
        <tissue evidence="3">Corpora cardiaca</tissue>
    </source>
</reference>
<accession>P85671</accession>
<keyword id="KW-0027">Amidation</keyword>
<keyword id="KW-0903">Direct protein sequencing</keyword>
<keyword id="KW-0372">Hormone</keyword>
<keyword id="KW-0527">Neuropeptide</keyword>
<keyword id="KW-0964">Secreted</keyword>
<keyword id="KW-0765">Sulfation</keyword>
<evidence type="ECO:0000250" key="1">
    <source>
        <dbReference type="UniProtKB" id="P41493"/>
    </source>
</evidence>
<evidence type="ECO:0000255" key="2"/>
<evidence type="ECO:0000269" key="3">
    <source>
    </source>
</evidence>
<evidence type="ECO:0000303" key="4">
    <source>
    </source>
</evidence>
<evidence type="ECO:0000305" key="5"/>
<comment type="function">
    <text evidence="1">Myotropic peptide.</text>
</comment>
<comment type="subcellular location">
    <subcellularLocation>
        <location evidence="5">Secreted</location>
    </subcellularLocation>
</comment>
<comment type="similarity">
    <text evidence="2">Belongs to the gastrin/cholecystokinin family.</text>
</comment>
<proteinExistence type="evidence at protein level"/>
<name>SK1_LUCSU</name>
<protein>
    <recommendedName>
        <fullName evidence="4">Sulfakinin-1</fullName>
        <shortName evidence="4">LucSu-SK-1</shortName>
    </recommendedName>
</protein>
<sequence length="11" mass="1459">EQFEDYGHMRF</sequence>
<feature type="peptide" id="PRO_0000378883" description="Sulfakinin-1" evidence="3">
    <location>
        <begin position="1"/>
        <end position="11"/>
    </location>
</feature>
<feature type="modified residue" description="Sulfotyrosine" evidence="1">
    <location>
        <position position="6"/>
    </location>
</feature>
<feature type="modified residue" description="Phenylalanine amide" evidence="3">
    <location>
        <position position="11"/>
    </location>
</feature>